<comment type="similarity">
    <text evidence="3">Belongs to the AB hydrolase superfamily.</text>
</comment>
<proteinExistence type="evidence at protein level"/>
<gene>
    <name type="ordered locus">SA2367</name>
</gene>
<dbReference type="EC" id="3.-.-.-"/>
<dbReference type="EMBL" id="BA000018">
    <property type="protein sequence ID" value="BAB43672.1"/>
    <property type="molecule type" value="Genomic_DNA"/>
</dbReference>
<dbReference type="PIR" id="F90063">
    <property type="entry name" value="F90063"/>
</dbReference>
<dbReference type="RefSeq" id="WP_000448918.1">
    <property type="nucleotide sequence ID" value="NC_002745.2"/>
</dbReference>
<dbReference type="SMR" id="Q7A3C4"/>
<dbReference type="ESTHER" id="staau-SA2367">
    <property type="family name" value="6_AlphaBeta_hydrolase"/>
</dbReference>
<dbReference type="EnsemblBacteria" id="BAB43672">
    <property type="protein sequence ID" value="BAB43672"/>
    <property type="gene ID" value="BAB43672"/>
</dbReference>
<dbReference type="KEGG" id="sau:SA2367"/>
<dbReference type="HOGENOM" id="CLU_083329_0_0_9"/>
<dbReference type="GO" id="GO:0016020">
    <property type="term" value="C:membrane"/>
    <property type="evidence" value="ECO:0007669"/>
    <property type="project" value="TreeGrafter"/>
</dbReference>
<dbReference type="GO" id="GO:0016787">
    <property type="term" value="F:hydrolase activity"/>
    <property type="evidence" value="ECO:0007669"/>
    <property type="project" value="UniProtKB-KW"/>
</dbReference>
<dbReference type="Gene3D" id="3.40.50.1820">
    <property type="entry name" value="alpha/beta hydrolase"/>
    <property type="match status" value="1"/>
</dbReference>
<dbReference type="InterPro" id="IPR000073">
    <property type="entry name" value="AB_hydrolase_1"/>
</dbReference>
<dbReference type="InterPro" id="IPR029058">
    <property type="entry name" value="AB_hydrolase_fold"/>
</dbReference>
<dbReference type="InterPro" id="IPR050266">
    <property type="entry name" value="AB_hydrolase_sf"/>
</dbReference>
<dbReference type="PANTHER" id="PTHR43798:SF33">
    <property type="entry name" value="HYDROLASE, PUTATIVE (AFU_ORTHOLOGUE AFUA_2G14860)-RELATED"/>
    <property type="match status" value="1"/>
</dbReference>
<dbReference type="PANTHER" id="PTHR43798">
    <property type="entry name" value="MONOACYLGLYCEROL LIPASE"/>
    <property type="match status" value="1"/>
</dbReference>
<dbReference type="Pfam" id="PF00561">
    <property type="entry name" value="Abhydrolase_1"/>
    <property type="match status" value="1"/>
</dbReference>
<dbReference type="SUPFAM" id="SSF53474">
    <property type="entry name" value="alpha/beta-Hydrolases"/>
    <property type="match status" value="1"/>
</dbReference>
<organism>
    <name type="scientific">Staphylococcus aureus (strain N315)</name>
    <dbReference type="NCBI Taxonomy" id="158879"/>
    <lineage>
        <taxon>Bacteria</taxon>
        <taxon>Bacillati</taxon>
        <taxon>Bacillota</taxon>
        <taxon>Bacilli</taxon>
        <taxon>Bacillales</taxon>
        <taxon>Staphylococcaceae</taxon>
        <taxon>Staphylococcus</taxon>
    </lineage>
</organism>
<feature type="chain" id="PRO_0000298615" description="Uncharacterized hydrolase SA2367">
    <location>
        <begin position="1"/>
        <end position="276"/>
    </location>
</feature>
<feature type="domain" description="AB hydrolase-1" evidence="1">
    <location>
        <begin position="20"/>
        <end position="137"/>
    </location>
</feature>
<feature type="region of interest" description="Disordered" evidence="2">
    <location>
        <begin position="57"/>
        <end position="76"/>
    </location>
</feature>
<protein>
    <recommendedName>
        <fullName>Uncharacterized hydrolase SA2367</fullName>
        <ecNumber>3.-.-.-</ecNumber>
    </recommendedName>
</protein>
<sequence length="276" mass="31005">METLELQGAKLRYHQVGQGPVLIFIPGANGTGNIFLPLAEQLKDHFTVVAVDRRDYGESELTEPLPDSASNPDSDYRVKRDAQDIAELAKSLSDEPVYILGSSSGSIVAMHVLKDYPEVVKKIAFHEPPINTFLPDSTYWKDKNDDIVHQILTEGLEKGMKTFGETLNIAPIDAKMMSQPADTEEGRIEQYKRTMFWSEFEIRQYTHSDITLDDFTKYSDKITLLNGTDSRGSFPQDVNFYINKETGIPIVDIPGGHLGYIQKPEGFADVLLNMWG</sequence>
<reference key="1">
    <citation type="journal article" date="2001" name="Lancet">
        <title>Whole genome sequencing of meticillin-resistant Staphylococcus aureus.</title>
        <authorList>
            <person name="Kuroda M."/>
            <person name="Ohta T."/>
            <person name="Uchiyama I."/>
            <person name="Baba T."/>
            <person name="Yuzawa H."/>
            <person name="Kobayashi I."/>
            <person name="Cui L."/>
            <person name="Oguchi A."/>
            <person name="Aoki K."/>
            <person name="Nagai Y."/>
            <person name="Lian J.-Q."/>
            <person name="Ito T."/>
            <person name="Kanamori M."/>
            <person name="Matsumaru H."/>
            <person name="Maruyama A."/>
            <person name="Murakami H."/>
            <person name="Hosoyama A."/>
            <person name="Mizutani-Ui Y."/>
            <person name="Takahashi N.K."/>
            <person name="Sawano T."/>
            <person name="Inoue R."/>
            <person name="Kaito C."/>
            <person name="Sekimizu K."/>
            <person name="Hirakawa H."/>
            <person name="Kuhara S."/>
            <person name="Goto S."/>
            <person name="Yabuzaki J."/>
            <person name="Kanehisa M."/>
            <person name="Yamashita A."/>
            <person name="Oshima K."/>
            <person name="Furuya K."/>
            <person name="Yoshino C."/>
            <person name="Shiba T."/>
            <person name="Hattori M."/>
            <person name="Ogasawara N."/>
            <person name="Hayashi H."/>
            <person name="Hiramatsu K."/>
        </authorList>
    </citation>
    <scope>NUCLEOTIDE SEQUENCE [LARGE SCALE GENOMIC DNA]</scope>
    <source>
        <strain>N315</strain>
    </source>
</reference>
<reference key="2">
    <citation type="journal article" date="2005" name="J. Microbiol. Methods">
        <title>Correlation of proteomic and transcriptomic profiles of Staphylococcus aureus during the post-exponential phase of growth.</title>
        <authorList>
            <person name="Scherl A."/>
            <person name="Francois P."/>
            <person name="Bento M."/>
            <person name="Deshusses J.M."/>
            <person name="Charbonnier Y."/>
            <person name="Converset V."/>
            <person name="Huyghe A."/>
            <person name="Walter N."/>
            <person name="Hoogland C."/>
            <person name="Appel R.D."/>
            <person name="Sanchez J.-C."/>
            <person name="Zimmermann-Ivol C.G."/>
            <person name="Corthals G.L."/>
            <person name="Hochstrasser D.F."/>
            <person name="Schrenzel J."/>
        </authorList>
    </citation>
    <scope>IDENTIFICATION BY MASS SPECTROMETRY</scope>
    <source>
        <strain>N315</strain>
    </source>
</reference>
<reference key="3">
    <citation type="submission" date="2007-10" db="UniProtKB">
        <title>Shotgun proteomic analysis of total and membrane protein extracts of S. aureus strain N315.</title>
        <authorList>
            <person name="Vaezzadeh A.R."/>
            <person name="Deshusses J."/>
            <person name="Lescuyer P."/>
            <person name="Hochstrasser D.F."/>
        </authorList>
    </citation>
    <scope>IDENTIFICATION BY MASS SPECTROMETRY [LARGE SCALE ANALYSIS]</scope>
    <source>
        <strain>N315</strain>
    </source>
</reference>
<name>Y2367_STAAN</name>
<accession>Q7A3C4</accession>
<keyword id="KW-0378">Hydrolase</keyword>
<evidence type="ECO:0000255" key="1"/>
<evidence type="ECO:0000256" key="2">
    <source>
        <dbReference type="SAM" id="MobiDB-lite"/>
    </source>
</evidence>
<evidence type="ECO:0000305" key="3"/>